<evidence type="ECO:0000255" key="1">
    <source>
        <dbReference type="HAMAP-Rule" id="MF_00011"/>
    </source>
</evidence>
<keyword id="KW-0963">Cytoplasm</keyword>
<keyword id="KW-0342">GTP-binding</keyword>
<keyword id="KW-0436">Ligase</keyword>
<keyword id="KW-0460">Magnesium</keyword>
<keyword id="KW-0479">Metal-binding</keyword>
<keyword id="KW-0547">Nucleotide-binding</keyword>
<keyword id="KW-0658">Purine biosynthesis</keyword>
<keyword id="KW-1185">Reference proteome</keyword>
<comment type="function">
    <text evidence="1">Plays an important role in the de novo pathway of purine nucleotide biosynthesis. Catalyzes the first committed step in the biosynthesis of AMP from IMP.</text>
</comment>
<comment type="catalytic activity">
    <reaction evidence="1">
        <text>IMP + L-aspartate + GTP = N(6)-(1,2-dicarboxyethyl)-AMP + GDP + phosphate + 2 H(+)</text>
        <dbReference type="Rhea" id="RHEA:15753"/>
        <dbReference type="ChEBI" id="CHEBI:15378"/>
        <dbReference type="ChEBI" id="CHEBI:29991"/>
        <dbReference type="ChEBI" id="CHEBI:37565"/>
        <dbReference type="ChEBI" id="CHEBI:43474"/>
        <dbReference type="ChEBI" id="CHEBI:57567"/>
        <dbReference type="ChEBI" id="CHEBI:58053"/>
        <dbReference type="ChEBI" id="CHEBI:58189"/>
        <dbReference type="EC" id="6.3.4.4"/>
    </reaction>
</comment>
<comment type="cofactor">
    <cofactor evidence="1">
        <name>Mg(2+)</name>
        <dbReference type="ChEBI" id="CHEBI:18420"/>
    </cofactor>
    <text evidence="1">Binds 1 Mg(2+) ion per subunit.</text>
</comment>
<comment type="pathway">
    <text evidence="1">Purine metabolism; AMP biosynthesis via de novo pathway; AMP from IMP: step 1/2.</text>
</comment>
<comment type="subunit">
    <text evidence="1">Homodimer.</text>
</comment>
<comment type="subcellular location">
    <subcellularLocation>
        <location evidence="1">Cytoplasm</location>
    </subcellularLocation>
</comment>
<comment type="similarity">
    <text evidence="1">Belongs to the adenylosuccinate synthetase family.</text>
</comment>
<protein>
    <recommendedName>
        <fullName evidence="1">Adenylosuccinate synthetase</fullName>
        <shortName evidence="1">AMPSase</shortName>
        <shortName evidence="1">AdSS</shortName>
        <ecNumber evidence="1">6.3.4.4</ecNumber>
    </recommendedName>
    <alternativeName>
        <fullName evidence="1">IMP--aspartate ligase</fullName>
    </alternativeName>
</protein>
<name>PURA_SYNC1</name>
<feature type="chain" id="PRO_0000224301" description="Adenylosuccinate synthetase">
    <location>
        <begin position="1"/>
        <end position="431"/>
    </location>
</feature>
<feature type="active site" description="Proton acceptor" evidence="1">
    <location>
        <position position="13"/>
    </location>
</feature>
<feature type="active site" description="Proton donor" evidence="1">
    <location>
        <position position="41"/>
    </location>
</feature>
<feature type="binding site" evidence="1">
    <location>
        <begin position="12"/>
        <end position="18"/>
    </location>
    <ligand>
        <name>GTP</name>
        <dbReference type="ChEBI" id="CHEBI:37565"/>
    </ligand>
</feature>
<feature type="binding site" description="in other chain" evidence="1">
    <location>
        <begin position="13"/>
        <end position="16"/>
    </location>
    <ligand>
        <name>IMP</name>
        <dbReference type="ChEBI" id="CHEBI:58053"/>
        <note>ligand shared between dimeric partners</note>
    </ligand>
</feature>
<feature type="binding site" evidence="1">
    <location>
        <position position="13"/>
    </location>
    <ligand>
        <name>Mg(2+)</name>
        <dbReference type="ChEBI" id="CHEBI:18420"/>
    </ligand>
</feature>
<feature type="binding site" description="in other chain" evidence="1">
    <location>
        <begin position="38"/>
        <end position="41"/>
    </location>
    <ligand>
        <name>IMP</name>
        <dbReference type="ChEBI" id="CHEBI:58053"/>
        <note>ligand shared between dimeric partners</note>
    </ligand>
</feature>
<feature type="binding site" evidence="1">
    <location>
        <begin position="40"/>
        <end position="42"/>
    </location>
    <ligand>
        <name>GTP</name>
        <dbReference type="ChEBI" id="CHEBI:37565"/>
    </ligand>
</feature>
<feature type="binding site" evidence="1">
    <location>
        <position position="40"/>
    </location>
    <ligand>
        <name>Mg(2+)</name>
        <dbReference type="ChEBI" id="CHEBI:18420"/>
    </ligand>
</feature>
<feature type="binding site" description="in other chain" evidence="1">
    <location>
        <position position="130"/>
    </location>
    <ligand>
        <name>IMP</name>
        <dbReference type="ChEBI" id="CHEBI:58053"/>
        <note>ligand shared between dimeric partners</note>
    </ligand>
</feature>
<feature type="binding site" evidence="1">
    <location>
        <position position="144"/>
    </location>
    <ligand>
        <name>IMP</name>
        <dbReference type="ChEBI" id="CHEBI:58053"/>
        <note>ligand shared between dimeric partners</note>
    </ligand>
</feature>
<feature type="binding site" description="in other chain" evidence="1">
    <location>
        <position position="225"/>
    </location>
    <ligand>
        <name>IMP</name>
        <dbReference type="ChEBI" id="CHEBI:58053"/>
        <note>ligand shared between dimeric partners</note>
    </ligand>
</feature>
<feature type="binding site" description="in other chain" evidence="1">
    <location>
        <position position="240"/>
    </location>
    <ligand>
        <name>IMP</name>
        <dbReference type="ChEBI" id="CHEBI:58053"/>
        <note>ligand shared between dimeric partners</note>
    </ligand>
</feature>
<feature type="binding site" evidence="1">
    <location>
        <begin position="300"/>
        <end position="306"/>
    </location>
    <ligand>
        <name>substrate</name>
    </ligand>
</feature>
<feature type="binding site" description="in other chain" evidence="1">
    <location>
        <position position="304"/>
    </location>
    <ligand>
        <name>IMP</name>
        <dbReference type="ChEBI" id="CHEBI:58053"/>
        <note>ligand shared between dimeric partners</note>
    </ligand>
</feature>
<feature type="binding site" evidence="1">
    <location>
        <position position="306"/>
    </location>
    <ligand>
        <name>GTP</name>
        <dbReference type="ChEBI" id="CHEBI:37565"/>
    </ligand>
</feature>
<feature type="binding site" evidence="1">
    <location>
        <begin position="332"/>
        <end position="334"/>
    </location>
    <ligand>
        <name>GTP</name>
        <dbReference type="ChEBI" id="CHEBI:37565"/>
    </ligand>
</feature>
<feature type="binding site" evidence="1">
    <location>
        <begin position="414"/>
        <end position="416"/>
    </location>
    <ligand>
        <name>GTP</name>
        <dbReference type="ChEBI" id="CHEBI:37565"/>
    </ligand>
</feature>
<accession>Q3A828</accession>
<proteinExistence type="inferred from homology"/>
<organism>
    <name type="scientific">Syntrophotalea carbinolica (strain DSM 2380 / NBRC 103641 / GraBd1)</name>
    <name type="common">Pelobacter carbinolicus</name>
    <dbReference type="NCBI Taxonomy" id="338963"/>
    <lineage>
        <taxon>Bacteria</taxon>
        <taxon>Pseudomonadati</taxon>
        <taxon>Thermodesulfobacteriota</taxon>
        <taxon>Desulfuromonadia</taxon>
        <taxon>Desulfuromonadales</taxon>
        <taxon>Syntrophotaleaceae</taxon>
        <taxon>Syntrophotalea</taxon>
    </lineage>
</organism>
<dbReference type="EC" id="6.3.4.4" evidence="1"/>
<dbReference type="EMBL" id="CP000142">
    <property type="protein sequence ID" value="ABA87464.1"/>
    <property type="molecule type" value="Genomic_DNA"/>
</dbReference>
<dbReference type="RefSeq" id="WP_011339864.1">
    <property type="nucleotide sequence ID" value="NC_007498.2"/>
</dbReference>
<dbReference type="SMR" id="Q3A828"/>
<dbReference type="STRING" id="338963.Pcar_0203"/>
<dbReference type="KEGG" id="pca:Pcar_0203"/>
<dbReference type="eggNOG" id="COG0104">
    <property type="taxonomic scope" value="Bacteria"/>
</dbReference>
<dbReference type="HOGENOM" id="CLU_029848_0_0_7"/>
<dbReference type="OrthoDB" id="9807553at2"/>
<dbReference type="UniPathway" id="UPA00075">
    <property type="reaction ID" value="UER00335"/>
</dbReference>
<dbReference type="Proteomes" id="UP000002534">
    <property type="component" value="Chromosome"/>
</dbReference>
<dbReference type="GO" id="GO:0005737">
    <property type="term" value="C:cytoplasm"/>
    <property type="evidence" value="ECO:0007669"/>
    <property type="project" value="UniProtKB-SubCell"/>
</dbReference>
<dbReference type="GO" id="GO:0004019">
    <property type="term" value="F:adenylosuccinate synthase activity"/>
    <property type="evidence" value="ECO:0007669"/>
    <property type="project" value="UniProtKB-UniRule"/>
</dbReference>
<dbReference type="GO" id="GO:0005525">
    <property type="term" value="F:GTP binding"/>
    <property type="evidence" value="ECO:0007669"/>
    <property type="project" value="UniProtKB-UniRule"/>
</dbReference>
<dbReference type="GO" id="GO:0000287">
    <property type="term" value="F:magnesium ion binding"/>
    <property type="evidence" value="ECO:0007669"/>
    <property type="project" value="UniProtKB-UniRule"/>
</dbReference>
<dbReference type="GO" id="GO:0044208">
    <property type="term" value="P:'de novo' AMP biosynthetic process"/>
    <property type="evidence" value="ECO:0007669"/>
    <property type="project" value="UniProtKB-UniRule"/>
</dbReference>
<dbReference type="GO" id="GO:0046040">
    <property type="term" value="P:IMP metabolic process"/>
    <property type="evidence" value="ECO:0007669"/>
    <property type="project" value="TreeGrafter"/>
</dbReference>
<dbReference type="CDD" id="cd03108">
    <property type="entry name" value="AdSS"/>
    <property type="match status" value="1"/>
</dbReference>
<dbReference type="FunFam" id="1.10.300.10:FF:000001">
    <property type="entry name" value="Adenylosuccinate synthetase"/>
    <property type="match status" value="1"/>
</dbReference>
<dbReference type="FunFam" id="3.90.170.10:FF:000001">
    <property type="entry name" value="Adenylosuccinate synthetase"/>
    <property type="match status" value="1"/>
</dbReference>
<dbReference type="Gene3D" id="3.40.440.10">
    <property type="entry name" value="Adenylosuccinate Synthetase, subunit A, domain 1"/>
    <property type="match status" value="1"/>
</dbReference>
<dbReference type="Gene3D" id="1.10.300.10">
    <property type="entry name" value="Adenylosuccinate Synthetase, subunit A, domain 2"/>
    <property type="match status" value="1"/>
</dbReference>
<dbReference type="Gene3D" id="3.90.170.10">
    <property type="entry name" value="Adenylosuccinate Synthetase, subunit A, domain 3"/>
    <property type="match status" value="1"/>
</dbReference>
<dbReference type="HAMAP" id="MF_00011">
    <property type="entry name" value="Adenylosucc_synth"/>
    <property type="match status" value="1"/>
</dbReference>
<dbReference type="InterPro" id="IPR018220">
    <property type="entry name" value="Adenylosuccin_syn_GTP-bd"/>
</dbReference>
<dbReference type="InterPro" id="IPR033128">
    <property type="entry name" value="Adenylosuccin_syn_Lys_AS"/>
</dbReference>
<dbReference type="InterPro" id="IPR042109">
    <property type="entry name" value="Adenylosuccinate_synth_dom1"/>
</dbReference>
<dbReference type="InterPro" id="IPR042110">
    <property type="entry name" value="Adenylosuccinate_synth_dom2"/>
</dbReference>
<dbReference type="InterPro" id="IPR042111">
    <property type="entry name" value="Adenylosuccinate_synth_dom3"/>
</dbReference>
<dbReference type="InterPro" id="IPR001114">
    <property type="entry name" value="Adenylosuccinate_synthetase"/>
</dbReference>
<dbReference type="InterPro" id="IPR027417">
    <property type="entry name" value="P-loop_NTPase"/>
</dbReference>
<dbReference type="NCBIfam" id="NF002223">
    <property type="entry name" value="PRK01117.1"/>
    <property type="match status" value="1"/>
</dbReference>
<dbReference type="NCBIfam" id="TIGR00184">
    <property type="entry name" value="purA"/>
    <property type="match status" value="1"/>
</dbReference>
<dbReference type="PANTHER" id="PTHR11846">
    <property type="entry name" value="ADENYLOSUCCINATE SYNTHETASE"/>
    <property type="match status" value="1"/>
</dbReference>
<dbReference type="PANTHER" id="PTHR11846:SF0">
    <property type="entry name" value="ADENYLOSUCCINATE SYNTHETASE"/>
    <property type="match status" value="1"/>
</dbReference>
<dbReference type="Pfam" id="PF00709">
    <property type="entry name" value="Adenylsucc_synt"/>
    <property type="match status" value="1"/>
</dbReference>
<dbReference type="SMART" id="SM00788">
    <property type="entry name" value="Adenylsucc_synt"/>
    <property type="match status" value="1"/>
</dbReference>
<dbReference type="SUPFAM" id="SSF52540">
    <property type="entry name" value="P-loop containing nucleoside triphosphate hydrolases"/>
    <property type="match status" value="1"/>
</dbReference>
<dbReference type="PROSITE" id="PS01266">
    <property type="entry name" value="ADENYLOSUCCIN_SYN_1"/>
    <property type="match status" value="1"/>
</dbReference>
<dbReference type="PROSITE" id="PS00513">
    <property type="entry name" value="ADENYLOSUCCIN_SYN_2"/>
    <property type="match status" value="1"/>
</dbReference>
<sequence length="431" mass="47299">MANVVIVGAQWGDEGKGKVVDIYTEHADDVVRFQGGNNAGHTLVVGEETTILHLIPSGILHEGKRCIIGNGVVLDPKVFLEEIGQLKKKGYLKDDKQLVIDGNAHIIMPYHKALDIAREQKSGARKIGTTGRGIGPTYEDKVARRGIRVMDLVHPDTFVRKVKEMLPEKNFYLEQYLGGEPLSEEAIVEEYSVYARELAKYVDRASLLLNRSIAEGRNVLFEGAQGALLDIDHGTYPYVTSSSTVAGGACTGSGVGPTVIDEVVGIVKAYVTRVGEGPFPTELHDEMGEKLRSEGHEFGSTTGRPRRTGWFDAVAMREAVRISGMTGLALTKMDVLNGLDTINVCTAYSYQGELLEDFPHDLDILKECKPVYEQVEGWQVDLEGATSFETLPPKAQAYLRKIEEVSGCPVVLVSIGPRRDQTIQLKNPFDK</sequence>
<gene>
    <name evidence="1" type="primary">purA</name>
    <name type="ordered locus">Pcar_0203</name>
</gene>
<reference key="1">
    <citation type="submission" date="2005-10" db="EMBL/GenBank/DDBJ databases">
        <title>Complete sequence of Pelobacter carbinolicus DSM 2380.</title>
        <authorList>
            <person name="Copeland A."/>
            <person name="Lucas S."/>
            <person name="Lapidus A."/>
            <person name="Barry K."/>
            <person name="Detter J.C."/>
            <person name="Glavina T."/>
            <person name="Hammon N."/>
            <person name="Israni S."/>
            <person name="Pitluck S."/>
            <person name="Chertkov O."/>
            <person name="Schmutz J."/>
            <person name="Larimer F."/>
            <person name="Land M."/>
            <person name="Kyrpides N."/>
            <person name="Ivanova N."/>
            <person name="Richardson P."/>
        </authorList>
    </citation>
    <scope>NUCLEOTIDE SEQUENCE [LARGE SCALE GENOMIC DNA]</scope>
    <source>
        <strain>DSM 2380 / NBRC 103641 / GraBd1</strain>
    </source>
</reference>